<organism>
    <name type="scientific">Nostoc sp. (strain PCC 7120 / SAG 25.82 / UTEX 2576)</name>
    <dbReference type="NCBI Taxonomy" id="103690"/>
    <lineage>
        <taxon>Bacteria</taxon>
        <taxon>Bacillati</taxon>
        <taxon>Cyanobacteriota</taxon>
        <taxon>Cyanophyceae</taxon>
        <taxon>Nostocales</taxon>
        <taxon>Nostocaceae</taxon>
        <taxon>Nostoc</taxon>
    </lineage>
</organism>
<sequence length="480" mass="54153">MTVRVRIAPSPTGNLHIGTARTAVFNWLFARHHGGTFILRIEDTDLERSRPEYTENIMTGLRWLGLNWDEGPFFQSQRLDLYQKAVKQLLDQGLAYRCYTTSEELEALREGQKAKGEAPRYDNRHRHLTPEQEAEFKAQGRSFVIRFKIDDEREIVWNDLVRGKMSWRGSDLGGDMVIARASENDTGQPLYNFVVVIDDIDMQISHVIRGEDHIANTAKQILLYEAFGAKIPEFAHTPLILNMEGRKLSKRDGVTSISDFKQMGFTSEGLVNYMTLLGWSPPDSTQEIFTLEAAAKEFTFERVNKAGAKFDWAKLDWLNSQYIHNTPVDQLTDLLIPYWEAAGYSLAGGRDRPWLEQLVGLLSASLTRLTDAVDMSKLFFTETVELSEEGSKQLQQEGSKAVLEAIIAALETQAQLTETAAQDIIKQVVKGQNVKKGLVMRSLRVALTGDVHGPDLIQSWLLLNQIGLDKPRLNQAIAVS</sequence>
<reference key="1">
    <citation type="journal article" date="2001" name="DNA Res.">
        <title>Complete genomic sequence of the filamentous nitrogen-fixing cyanobacterium Anabaena sp. strain PCC 7120.</title>
        <authorList>
            <person name="Kaneko T."/>
            <person name="Nakamura Y."/>
            <person name="Wolk C.P."/>
            <person name="Kuritz T."/>
            <person name="Sasamoto S."/>
            <person name="Watanabe A."/>
            <person name="Iriguchi M."/>
            <person name="Ishikawa A."/>
            <person name="Kawashima K."/>
            <person name="Kimura T."/>
            <person name="Kishida Y."/>
            <person name="Kohara M."/>
            <person name="Matsumoto M."/>
            <person name="Matsuno A."/>
            <person name="Muraki A."/>
            <person name="Nakazaki N."/>
            <person name="Shimpo S."/>
            <person name="Sugimoto M."/>
            <person name="Takazawa M."/>
            <person name="Yamada M."/>
            <person name="Yasuda M."/>
            <person name="Tabata S."/>
        </authorList>
    </citation>
    <scope>NUCLEOTIDE SEQUENCE [LARGE SCALE GENOMIC DNA]</scope>
    <source>
        <strain>PCC 7120 / SAG 25.82 / UTEX 2576</strain>
    </source>
</reference>
<feature type="chain" id="PRO_0000119494" description="Glutamate--tRNA ligase">
    <location>
        <begin position="1"/>
        <end position="480"/>
    </location>
</feature>
<feature type="short sequence motif" description="'HIGH' region" evidence="1">
    <location>
        <begin position="9"/>
        <end position="19"/>
    </location>
</feature>
<feature type="short sequence motif" description="'KMSKS' region" evidence="1">
    <location>
        <begin position="247"/>
        <end position="251"/>
    </location>
</feature>
<feature type="binding site" evidence="1">
    <location>
        <position position="250"/>
    </location>
    <ligand>
        <name>ATP</name>
        <dbReference type="ChEBI" id="CHEBI:30616"/>
    </ligand>
</feature>
<accession>Q8YS86</accession>
<protein>
    <recommendedName>
        <fullName evidence="1">Glutamate--tRNA ligase</fullName>
        <ecNumber evidence="1">6.1.1.17</ecNumber>
    </recommendedName>
    <alternativeName>
        <fullName evidence="1">Glutamyl-tRNA synthetase</fullName>
        <shortName evidence="1">GluRS</shortName>
    </alternativeName>
</protein>
<dbReference type="EC" id="6.1.1.17" evidence="1"/>
<dbReference type="EMBL" id="BA000019">
    <property type="protein sequence ID" value="BAB74904.1"/>
    <property type="molecule type" value="Genomic_DNA"/>
</dbReference>
<dbReference type="PIR" id="AF2206">
    <property type="entry name" value="AF2206"/>
</dbReference>
<dbReference type="RefSeq" id="WP_010997356.1">
    <property type="nucleotide sequence ID" value="NZ_RSCN01000001.1"/>
</dbReference>
<dbReference type="SMR" id="Q8YS86"/>
<dbReference type="STRING" id="103690.gene:10495242"/>
<dbReference type="KEGG" id="ana:all3205"/>
<dbReference type="eggNOG" id="COG0008">
    <property type="taxonomic scope" value="Bacteria"/>
</dbReference>
<dbReference type="OrthoDB" id="9807503at2"/>
<dbReference type="Proteomes" id="UP000002483">
    <property type="component" value="Chromosome"/>
</dbReference>
<dbReference type="GO" id="GO:0005829">
    <property type="term" value="C:cytosol"/>
    <property type="evidence" value="ECO:0007669"/>
    <property type="project" value="TreeGrafter"/>
</dbReference>
<dbReference type="GO" id="GO:0005524">
    <property type="term" value="F:ATP binding"/>
    <property type="evidence" value="ECO:0007669"/>
    <property type="project" value="UniProtKB-UniRule"/>
</dbReference>
<dbReference type="GO" id="GO:0004818">
    <property type="term" value="F:glutamate-tRNA ligase activity"/>
    <property type="evidence" value="ECO:0007669"/>
    <property type="project" value="UniProtKB-UniRule"/>
</dbReference>
<dbReference type="GO" id="GO:0000049">
    <property type="term" value="F:tRNA binding"/>
    <property type="evidence" value="ECO:0007669"/>
    <property type="project" value="InterPro"/>
</dbReference>
<dbReference type="GO" id="GO:0008270">
    <property type="term" value="F:zinc ion binding"/>
    <property type="evidence" value="ECO:0007669"/>
    <property type="project" value="InterPro"/>
</dbReference>
<dbReference type="GO" id="GO:0006424">
    <property type="term" value="P:glutamyl-tRNA aminoacylation"/>
    <property type="evidence" value="ECO:0007669"/>
    <property type="project" value="UniProtKB-UniRule"/>
</dbReference>
<dbReference type="CDD" id="cd00808">
    <property type="entry name" value="GluRS_core"/>
    <property type="match status" value="1"/>
</dbReference>
<dbReference type="FunFam" id="3.40.50.620:FF:000007">
    <property type="entry name" value="Glutamate--tRNA ligase"/>
    <property type="match status" value="1"/>
</dbReference>
<dbReference type="Gene3D" id="1.10.10.350">
    <property type="match status" value="1"/>
</dbReference>
<dbReference type="Gene3D" id="1.10.8.70">
    <property type="entry name" value="Glutamate-tRNA synthetase, class I, anticodon-binding domain 1"/>
    <property type="match status" value="1"/>
</dbReference>
<dbReference type="Gene3D" id="1.10.1160.10">
    <property type="entry name" value="Glutamyl-trna Synthetase, Domain 2"/>
    <property type="match status" value="1"/>
</dbReference>
<dbReference type="Gene3D" id="3.90.800.10">
    <property type="entry name" value="Glutamyl-tRNA Synthetase, Domain 3"/>
    <property type="match status" value="1"/>
</dbReference>
<dbReference type="Gene3D" id="3.40.50.620">
    <property type="entry name" value="HUPs"/>
    <property type="match status" value="1"/>
</dbReference>
<dbReference type="HAMAP" id="MF_00022">
    <property type="entry name" value="Glu_tRNA_synth_type1"/>
    <property type="match status" value="1"/>
</dbReference>
<dbReference type="InterPro" id="IPR045462">
    <property type="entry name" value="aa-tRNA-synth_I_cd-bd"/>
</dbReference>
<dbReference type="InterPro" id="IPR020751">
    <property type="entry name" value="aa-tRNA-synth_I_codon-bd_sub2"/>
</dbReference>
<dbReference type="InterPro" id="IPR001412">
    <property type="entry name" value="aa-tRNA-synth_I_CS"/>
</dbReference>
<dbReference type="InterPro" id="IPR008925">
    <property type="entry name" value="aa_tRNA-synth_I_cd-bd_sf"/>
</dbReference>
<dbReference type="InterPro" id="IPR004527">
    <property type="entry name" value="Glu-tRNA-ligase_bac/mito"/>
</dbReference>
<dbReference type="InterPro" id="IPR020752">
    <property type="entry name" value="Glu-tRNA-synth_I_codon-bd_sub1"/>
</dbReference>
<dbReference type="InterPro" id="IPR000924">
    <property type="entry name" value="Glu/Gln-tRNA-synth"/>
</dbReference>
<dbReference type="InterPro" id="IPR020058">
    <property type="entry name" value="Glu/Gln-tRNA-synth_Ib_cat-dom"/>
</dbReference>
<dbReference type="InterPro" id="IPR020061">
    <property type="entry name" value="Glu_tRNA_lig_a-bdl"/>
</dbReference>
<dbReference type="InterPro" id="IPR049940">
    <property type="entry name" value="GluQ/Sye"/>
</dbReference>
<dbReference type="InterPro" id="IPR033910">
    <property type="entry name" value="GluRS_core"/>
</dbReference>
<dbReference type="InterPro" id="IPR014729">
    <property type="entry name" value="Rossmann-like_a/b/a_fold"/>
</dbReference>
<dbReference type="NCBIfam" id="TIGR00464">
    <property type="entry name" value="gltX_bact"/>
    <property type="match status" value="1"/>
</dbReference>
<dbReference type="PANTHER" id="PTHR43311">
    <property type="entry name" value="GLUTAMATE--TRNA LIGASE"/>
    <property type="match status" value="1"/>
</dbReference>
<dbReference type="PANTHER" id="PTHR43311:SF2">
    <property type="entry name" value="GLUTAMATE--TRNA LIGASE, MITOCHONDRIAL-RELATED"/>
    <property type="match status" value="1"/>
</dbReference>
<dbReference type="Pfam" id="PF19269">
    <property type="entry name" value="Anticodon_2"/>
    <property type="match status" value="1"/>
</dbReference>
<dbReference type="Pfam" id="PF00749">
    <property type="entry name" value="tRNA-synt_1c"/>
    <property type="match status" value="1"/>
</dbReference>
<dbReference type="PRINTS" id="PR00987">
    <property type="entry name" value="TRNASYNTHGLU"/>
</dbReference>
<dbReference type="SUPFAM" id="SSF48163">
    <property type="entry name" value="An anticodon-binding domain of class I aminoacyl-tRNA synthetases"/>
    <property type="match status" value="1"/>
</dbReference>
<dbReference type="SUPFAM" id="SSF52374">
    <property type="entry name" value="Nucleotidylyl transferase"/>
    <property type="match status" value="1"/>
</dbReference>
<dbReference type="PROSITE" id="PS00178">
    <property type="entry name" value="AA_TRNA_LIGASE_I"/>
    <property type="match status" value="1"/>
</dbReference>
<keyword id="KW-0030">Aminoacyl-tRNA synthetase</keyword>
<keyword id="KW-0067">ATP-binding</keyword>
<keyword id="KW-0963">Cytoplasm</keyword>
<keyword id="KW-0436">Ligase</keyword>
<keyword id="KW-0547">Nucleotide-binding</keyword>
<keyword id="KW-0648">Protein biosynthesis</keyword>
<keyword id="KW-1185">Reference proteome</keyword>
<evidence type="ECO:0000255" key="1">
    <source>
        <dbReference type="HAMAP-Rule" id="MF_00022"/>
    </source>
</evidence>
<proteinExistence type="inferred from homology"/>
<name>SYE_NOSS1</name>
<gene>
    <name evidence="1" type="primary">gltX</name>
    <name type="ordered locus">all3205</name>
</gene>
<comment type="function">
    <text evidence="1">Catalyzes the attachment of glutamate to tRNA(Glu) in a two-step reaction: glutamate is first activated by ATP to form Glu-AMP and then transferred to the acceptor end of tRNA(Glu).</text>
</comment>
<comment type="catalytic activity">
    <reaction evidence="1">
        <text>tRNA(Glu) + L-glutamate + ATP = L-glutamyl-tRNA(Glu) + AMP + diphosphate</text>
        <dbReference type="Rhea" id="RHEA:23540"/>
        <dbReference type="Rhea" id="RHEA-COMP:9663"/>
        <dbReference type="Rhea" id="RHEA-COMP:9680"/>
        <dbReference type="ChEBI" id="CHEBI:29985"/>
        <dbReference type="ChEBI" id="CHEBI:30616"/>
        <dbReference type="ChEBI" id="CHEBI:33019"/>
        <dbReference type="ChEBI" id="CHEBI:78442"/>
        <dbReference type="ChEBI" id="CHEBI:78520"/>
        <dbReference type="ChEBI" id="CHEBI:456215"/>
        <dbReference type="EC" id="6.1.1.17"/>
    </reaction>
</comment>
<comment type="subunit">
    <text evidence="1">Monomer.</text>
</comment>
<comment type="subcellular location">
    <subcellularLocation>
        <location evidence="1">Cytoplasm</location>
    </subcellularLocation>
</comment>
<comment type="similarity">
    <text evidence="1">Belongs to the class-I aminoacyl-tRNA synthetase family. Glutamate--tRNA ligase type 1 subfamily.</text>
</comment>